<organism>
    <name type="scientific">Haemophilus influenzae (strain ATCC 51907 / DSM 11121 / KW20 / Rd)</name>
    <dbReference type="NCBI Taxonomy" id="71421"/>
    <lineage>
        <taxon>Bacteria</taxon>
        <taxon>Pseudomonadati</taxon>
        <taxon>Pseudomonadota</taxon>
        <taxon>Gammaproteobacteria</taxon>
        <taxon>Pasteurellales</taxon>
        <taxon>Pasteurellaceae</taxon>
        <taxon>Haemophilus</taxon>
    </lineage>
</organism>
<reference key="1">
    <citation type="journal article" date="1995" name="Science">
        <title>Whole-genome random sequencing and assembly of Haemophilus influenzae Rd.</title>
        <authorList>
            <person name="Fleischmann R.D."/>
            <person name="Adams M.D."/>
            <person name="White O."/>
            <person name="Clayton R.A."/>
            <person name="Kirkness E.F."/>
            <person name="Kerlavage A.R."/>
            <person name="Bult C.J."/>
            <person name="Tomb J.-F."/>
            <person name="Dougherty B.A."/>
            <person name="Merrick J.M."/>
            <person name="McKenney K."/>
            <person name="Sutton G.G."/>
            <person name="FitzHugh W."/>
            <person name="Fields C.A."/>
            <person name="Gocayne J.D."/>
            <person name="Scott J.D."/>
            <person name="Shirley R."/>
            <person name="Liu L.-I."/>
            <person name="Glodek A."/>
            <person name="Kelley J.M."/>
            <person name="Weidman J.F."/>
            <person name="Phillips C.A."/>
            <person name="Spriggs T."/>
            <person name="Hedblom E."/>
            <person name="Cotton M.D."/>
            <person name="Utterback T.R."/>
            <person name="Hanna M.C."/>
            <person name="Nguyen D.T."/>
            <person name="Saudek D.M."/>
            <person name="Brandon R.C."/>
            <person name="Fine L.D."/>
            <person name="Fritchman J.L."/>
            <person name="Fuhrmann J.L."/>
            <person name="Geoghagen N.S.M."/>
            <person name="Gnehm C.L."/>
            <person name="McDonald L.A."/>
            <person name="Small K.V."/>
            <person name="Fraser C.M."/>
            <person name="Smith H.O."/>
            <person name="Venter J.C."/>
        </authorList>
    </citation>
    <scope>NUCLEOTIDE SEQUENCE [LARGE SCALE GENOMIC DNA]</scope>
    <source>
        <strain>ATCC 51907 / DSM 11121 / KW20 / Rd</strain>
    </source>
</reference>
<comment type="similarity">
    <text evidence="1">Belongs to the NAD(P)H dehydrogenase (quinone) family.</text>
</comment>
<feature type="chain" id="PRO_0000071631" description="Uncharacterized NAD(P)H oxidoreductase HI_1544">
    <location>
        <begin position="1"/>
        <end position="202"/>
    </location>
</feature>
<protein>
    <recommendedName>
        <fullName>Uncharacterized NAD(P)H oxidoreductase HI_1544</fullName>
        <ecNumber>1.6.99.-</ecNumber>
    </recommendedName>
</protein>
<keyword id="KW-0560">Oxidoreductase</keyword>
<keyword id="KW-1185">Reference proteome</keyword>
<name>Y1544_HAEIN</name>
<accession>P45245</accession>
<dbReference type="EC" id="1.6.99.-"/>
<dbReference type="EMBL" id="L42023">
    <property type="protein sequence ID" value="AAC23194.1"/>
    <property type="molecule type" value="Genomic_DNA"/>
</dbReference>
<dbReference type="PIR" id="G64128">
    <property type="entry name" value="G64128"/>
</dbReference>
<dbReference type="RefSeq" id="NP_439693.1">
    <property type="nucleotide sequence ID" value="NC_000907.1"/>
</dbReference>
<dbReference type="SMR" id="P45245"/>
<dbReference type="STRING" id="71421.HI_1544"/>
<dbReference type="EnsemblBacteria" id="AAC23194">
    <property type="protein sequence ID" value="AAC23194"/>
    <property type="gene ID" value="HI_1544"/>
</dbReference>
<dbReference type="KEGG" id="hin:HI_1544"/>
<dbReference type="PATRIC" id="fig|71421.8.peg.1615"/>
<dbReference type="eggNOG" id="COG2249">
    <property type="taxonomic scope" value="Bacteria"/>
</dbReference>
<dbReference type="HOGENOM" id="CLU_058643_1_0_6"/>
<dbReference type="OrthoDB" id="9798454at2"/>
<dbReference type="PhylomeDB" id="P45245"/>
<dbReference type="BioCyc" id="HINF71421:G1GJ1-1564-MONOMER"/>
<dbReference type="Proteomes" id="UP000000579">
    <property type="component" value="Chromosome"/>
</dbReference>
<dbReference type="GO" id="GO:0005829">
    <property type="term" value="C:cytosol"/>
    <property type="evidence" value="ECO:0000318"/>
    <property type="project" value="GO_Central"/>
</dbReference>
<dbReference type="GO" id="GO:0003955">
    <property type="term" value="F:NAD(P)H dehydrogenase (quinone) activity"/>
    <property type="evidence" value="ECO:0000318"/>
    <property type="project" value="GO_Central"/>
</dbReference>
<dbReference type="Gene3D" id="3.40.50.360">
    <property type="match status" value="1"/>
</dbReference>
<dbReference type="InterPro" id="IPR003680">
    <property type="entry name" value="Flavodoxin_fold"/>
</dbReference>
<dbReference type="InterPro" id="IPR029039">
    <property type="entry name" value="Flavoprotein-like_sf"/>
</dbReference>
<dbReference type="InterPro" id="IPR051545">
    <property type="entry name" value="NAD(P)H_dehydrogenase_qn"/>
</dbReference>
<dbReference type="PANTHER" id="PTHR10204">
    <property type="entry name" value="NAD P H OXIDOREDUCTASE-RELATED"/>
    <property type="match status" value="1"/>
</dbReference>
<dbReference type="PANTHER" id="PTHR10204:SF34">
    <property type="entry name" value="NAD(P)H DEHYDROGENASE [QUINONE] 1 ISOFORM 1"/>
    <property type="match status" value="1"/>
</dbReference>
<dbReference type="Pfam" id="PF02525">
    <property type="entry name" value="Flavodoxin_2"/>
    <property type="match status" value="1"/>
</dbReference>
<dbReference type="SUPFAM" id="SSF52218">
    <property type="entry name" value="Flavoproteins"/>
    <property type="match status" value="1"/>
</dbReference>
<gene>
    <name type="ordered locus">HI_1544</name>
</gene>
<proteinExistence type="inferred from homology"/>
<evidence type="ECO:0000305" key="1"/>
<sequence length="202" mass="23160">MNHLIIFAHPNSVRSFGRAIANRIEQISQENGVNVFFRDLYEMNFNPILSHEELQNANNGIIPEDIQQEHDFILQADLITLVYPLWWMGFPAILKGYLDRVLSHGFAYKTENGESVGLLKNKQMQQFITIGSNVDKYKEFGVDKSLNHCLINGLFNYCGIENVEFELFGDIHLIDDKARKAMIELAAQKTQAKLTALLKEKE</sequence>